<feature type="chain" id="PRO_0000237652" description="Uncharacterized protein YOR072W-B">
    <location>
        <begin position="1"/>
        <end position="53"/>
    </location>
</feature>
<sequence>MILALGDFLTNRKTKHARGPGFNSQLAPFIFDYLFPIGRVTDFFYFFQGPFVL</sequence>
<keyword id="KW-1185">Reference proteome</keyword>
<dbReference type="EMBL" id="Z74980">
    <property type="status" value="NOT_ANNOTATED_CDS"/>
    <property type="molecule type" value="Genomic_DNA"/>
</dbReference>
<dbReference type="EMBL" id="BK006948">
    <property type="protein sequence ID" value="DAA10851.1"/>
    <property type="molecule type" value="Genomic_DNA"/>
</dbReference>
<dbReference type="RefSeq" id="NP_878171.1">
    <property type="nucleotide sequence ID" value="NM_001184526.1"/>
</dbReference>
<dbReference type="BioGRID" id="37025">
    <property type="interactions" value="111"/>
</dbReference>
<dbReference type="FunCoup" id="Q3E832">
    <property type="interactions" value="14"/>
</dbReference>
<dbReference type="STRING" id="4932.YOR072W-B"/>
<dbReference type="PaxDb" id="4932-YOR072W-B"/>
<dbReference type="EnsemblFungi" id="YOR072W-B_mRNA">
    <property type="protein sequence ID" value="YOR072W-B"/>
    <property type="gene ID" value="YOR072W-B"/>
</dbReference>
<dbReference type="GeneID" id="1466483"/>
<dbReference type="KEGG" id="sce:YOR072W-B"/>
<dbReference type="AGR" id="SGD:S000028516"/>
<dbReference type="SGD" id="S000028516">
    <property type="gene designation" value="YOR072W-B"/>
</dbReference>
<dbReference type="VEuPathDB" id="FungiDB:YOR072W-B"/>
<dbReference type="GeneTree" id="ENSGT00940000180652"/>
<dbReference type="HOGENOM" id="CLU_3070474_0_0_1"/>
<dbReference type="InParanoid" id="Q3E832"/>
<dbReference type="BioCyc" id="YEAST:G3O-33898-MONOMER"/>
<dbReference type="PRO" id="PR:Q3E832"/>
<dbReference type="Proteomes" id="UP000002311">
    <property type="component" value="Chromosome XV"/>
</dbReference>
<dbReference type="RNAct" id="Q3E832">
    <property type="molecule type" value="protein"/>
</dbReference>
<gene>
    <name type="ordered locus">YOR072W-B</name>
</gene>
<organism>
    <name type="scientific">Saccharomyces cerevisiae (strain ATCC 204508 / S288c)</name>
    <name type="common">Baker's yeast</name>
    <dbReference type="NCBI Taxonomy" id="559292"/>
    <lineage>
        <taxon>Eukaryota</taxon>
        <taxon>Fungi</taxon>
        <taxon>Dikarya</taxon>
        <taxon>Ascomycota</taxon>
        <taxon>Saccharomycotina</taxon>
        <taxon>Saccharomycetes</taxon>
        <taxon>Saccharomycetales</taxon>
        <taxon>Saccharomycetaceae</taxon>
        <taxon>Saccharomyces</taxon>
    </lineage>
</organism>
<accession>Q3E832</accession>
<accession>D6W2D5</accession>
<name>YO72B_YEAST</name>
<protein>
    <recommendedName>
        <fullName>Uncharacterized protein YOR072W-B</fullName>
    </recommendedName>
</protein>
<proteinExistence type="evidence at protein level"/>
<reference key="1">
    <citation type="journal article" date="1997" name="Nature">
        <title>The nucleotide sequence of Saccharomyces cerevisiae chromosome XV.</title>
        <authorList>
            <person name="Dujon B."/>
            <person name="Albermann K."/>
            <person name="Aldea M."/>
            <person name="Alexandraki D."/>
            <person name="Ansorge W."/>
            <person name="Arino J."/>
            <person name="Benes V."/>
            <person name="Bohn C."/>
            <person name="Bolotin-Fukuhara M."/>
            <person name="Bordonne R."/>
            <person name="Boyer J."/>
            <person name="Camasses A."/>
            <person name="Casamayor A."/>
            <person name="Casas C."/>
            <person name="Cheret G."/>
            <person name="Cziepluch C."/>
            <person name="Daignan-Fornier B."/>
            <person name="Dang V.-D."/>
            <person name="de Haan M."/>
            <person name="Delius H."/>
            <person name="Durand P."/>
            <person name="Fairhead C."/>
            <person name="Feldmann H."/>
            <person name="Gaillon L."/>
            <person name="Galisson F."/>
            <person name="Gamo F.-J."/>
            <person name="Gancedo C."/>
            <person name="Goffeau A."/>
            <person name="Goulding S.E."/>
            <person name="Grivell L.A."/>
            <person name="Habbig B."/>
            <person name="Hand N.J."/>
            <person name="Hani J."/>
            <person name="Hattenhorst U."/>
            <person name="Hebling U."/>
            <person name="Hernando Y."/>
            <person name="Herrero E."/>
            <person name="Heumann K."/>
            <person name="Hiesel R."/>
            <person name="Hilger F."/>
            <person name="Hofmann B."/>
            <person name="Hollenberg C.P."/>
            <person name="Hughes B."/>
            <person name="Jauniaux J.-C."/>
            <person name="Kalogeropoulos A."/>
            <person name="Katsoulou C."/>
            <person name="Kordes E."/>
            <person name="Lafuente M.J."/>
            <person name="Landt O."/>
            <person name="Louis E.J."/>
            <person name="Maarse A.C."/>
            <person name="Madania A."/>
            <person name="Mannhaupt G."/>
            <person name="Marck C."/>
            <person name="Martin R.P."/>
            <person name="Mewes H.-W."/>
            <person name="Michaux G."/>
            <person name="Paces V."/>
            <person name="Parle-McDermott A.G."/>
            <person name="Pearson B.M."/>
            <person name="Perrin A."/>
            <person name="Pettersson B."/>
            <person name="Poch O."/>
            <person name="Pohl T.M."/>
            <person name="Poirey R."/>
            <person name="Portetelle D."/>
            <person name="Pujol A."/>
            <person name="Purnelle B."/>
            <person name="Ramezani Rad M."/>
            <person name="Rechmann S."/>
            <person name="Schwager C."/>
            <person name="Schweizer M."/>
            <person name="Sor F."/>
            <person name="Sterky F."/>
            <person name="Tarassov I.A."/>
            <person name="Teodoru C."/>
            <person name="Tettelin H."/>
            <person name="Thierry A."/>
            <person name="Tobiasch E."/>
            <person name="Tzermia M."/>
            <person name="Uhlen M."/>
            <person name="Unseld M."/>
            <person name="Valens M."/>
            <person name="Vandenbol M."/>
            <person name="Vetter I."/>
            <person name="Vlcek C."/>
            <person name="Voet M."/>
            <person name="Volckaert G."/>
            <person name="Voss H."/>
            <person name="Wambutt R."/>
            <person name="Wedler H."/>
            <person name="Wiemann S."/>
            <person name="Winsor B."/>
            <person name="Wolfe K.H."/>
            <person name="Zollner A."/>
            <person name="Zumstein E."/>
            <person name="Kleine K."/>
        </authorList>
    </citation>
    <scope>NUCLEOTIDE SEQUENCE [LARGE SCALE GENOMIC DNA]</scope>
    <source>
        <strain>ATCC 204508 / S288c</strain>
    </source>
</reference>
<reference key="2">
    <citation type="journal article" date="2014" name="G3 (Bethesda)">
        <title>The reference genome sequence of Saccharomyces cerevisiae: Then and now.</title>
        <authorList>
            <person name="Engel S.R."/>
            <person name="Dietrich F.S."/>
            <person name="Fisk D.G."/>
            <person name="Binkley G."/>
            <person name="Balakrishnan R."/>
            <person name="Costanzo M.C."/>
            <person name="Dwight S.S."/>
            <person name="Hitz B.C."/>
            <person name="Karra K."/>
            <person name="Nash R.S."/>
            <person name="Weng S."/>
            <person name="Wong E.D."/>
            <person name="Lloyd P."/>
            <person name="Skrzypek M.S."/>
            <person name="Miyasato S.R."/>
            <person name="Simison M."/>
            <person name="Cherry J.M."/>
        </authorList>
    </citation>
    <scope>GENOME REANNOTATION</scope>
    <source>
        <strain>ATCC 204508 / S288c</strain>
    </source>
</reference>
<reference key="3">
    <citation type="journal article" date="2002" name="Genome Res.">
        <title>Parallel identification of new genes in Saccharomyces cerevisiae.</title>
        <authorList>
            <person name="Oshiro G."/>
            <person name="Wodicka L.M."/>
            <person name="Washburn M.P."/>
            <person name="Yates J.R. III"/>
            <person name="Lockhart D.J."/>
            <person name="Winzeler E.A."/>
        </authorList>
    </citation>
    <scope>IDENTIFICATION BY MASS SPECTROMETRY</scope>
</reference>